<gene>
    <name evidence="1" type="primary">cyaY</name>
    <name type="ordered locus">Bcep1808_0368</name>
</gene>
<evidence type="ECO:0000255" key="1">
    <source>
        <dbReference type="HAMAP-Rule" id="MF_00142"/>
    </source>
</evidence>
<keyword id="KW-0408">Iron</keyword>
<keyword id="KW-0479">Metal-binding</keyword>
<feature type="chain" id="PRO_1000010923" description="Iron-sulfur cluster assembly protein CyaY">
    <location>
        <begin position="1"/>
        <end position="108"/>
    </location>
</feature>
<dbReference type="EMBL" id="CP000614">
    <property type="protein sequence ID" value="ABO53381.1"/>
    <property type="molecule type" value="Genomic_DNA"/>
</dbReference>
<dbReference type="SMR" id="A4JAS8"/>
<dbReference type="KEGG" id="bvi:Bcep1808_0368"/>
<dbReference type="eggNOG" id="COG1965">
    <property type="taxonomic scope" value="Bacteria"/>
</dbReference>
<dbReference type="HOGENOM" id="CLU_080880_3_0_4"/>
<dbReference type="Proteomes" id="UP000002287">
    <property type="component" value="Chromosome 1"/>
</dbReference>
<dbReference type="GO" id="GO:0005829">
    <property type="term" value="C:cytosol"/>
    <property type="evidence" value="ECO:0007669"/>
    <property type="project" value="TreeGrafter"/>
</dbReference>
<dbReference type="GO" id="GO:0008199">
    <property type="term" value="F:ferric iron binding"/>
    <property type="evidence" value="ECO:0007669"/>
    <property type="project" value="InterPro"/>
</dbReference>
<dbReference type="GO" id="GO:0008198">
    <property type="term" value="F:ferrous iron binding"/>
    <property type="evidence" value="ECO:0007669"/>
    <property type="project" value="TreeGrafter"/>
</dbReference>
<dbReference type="GO" id="GO:0016226">
    <property type="term" value="P:iron-sulfur cluster assembly"/>
    <property type="evidence" value="ECO:0007669"/>
    <property type="project" value="UniProtKB-UniRule"/>
</dbReference>
<dbReference type="CDD" id="cd00503">
    <property type="entry name" value="Frataxin"/>
    <property type="match status" value="1"/>
</dbReference>
<dbReference type="Gene3D" id="3.30.920.10">
    <property type="entry name" value="Frataxin/CyaY"/>
    <property type="match status" value="1"/>
</dbReference>
<dbReference type="HAMAP" id="MF_00142">
    <property type="entry name" value="CyaY"/>
    <property type="match status" value="1"/>
</dbReference>
<dbReference type="InterPro" id="IPR047584">
    <property type="entry name" value="CyaY"/>
</dbReference>
<dbReference type="InterPro" id="IPR002908">
    <property type="entry name" value="Frataxin/CyaY"/>
</dbReference>
<dbReference type="InterPro" id="IPR036524">
    <property type="entry name" value="Frataxin/CyaY_sf"/>
</dbReference>
<dbReference type="InterPro" id="IPR020895">
    <property type="entry name" value="Frataxin_CS"/>
</dbReference>
<dbReference type="NCBIfam" id="TIGR03421">
    <property type="entry name" value="FeS_CyaY"/>
    <property type="match status" value="1"/>
</dbReference>
<dbReference type="PANTHER" id="PTHR16821">
    <property type="entry name" value="FRATAXIN"/>
    <property type="match status" value="1"/>
</dbReference>
<dbReference type="PANTHER" id="PTHR16821:SF2">
    <property type="entry name" value="FRATAXIN, MITOCHONDRIAL"/>
    <property type="match status" value="1"/>
</dbReference>
<dbReference type="Pfam" id="PF01491">
    <property type="entry name" value="Frataxin_Cyay"/>
    <property type="match status" value="1"/>
</dbReference>
<dbReference type="SMART" id="SM01219">
    <property type="entry name" value="Frataxin_Cyay"/>
    <property type="match status" value="1"/>
</dbReference>
<dbReference type="SUPFAM" id="SSF55387">
    <property type="entry name" value="Frataxin/Nqo15-like"/>
    <property type="match status" value="1"/>
</dbReference>
<dbReference type="PROSITE" id="PS01344">
    <property type="entry name" value="FRATAXIN_1"/>
    <property type="match status" value="1"/>
</dbReference>
<dbReference type="PROSITE" id="PS50810">
    <property type="entry name" value="FRATAXIN_2"/>
    <property type="match status" value="1"/>
</dbReference>
<proteinExistence type="inferred from homology"/>
<sequence>MSDTEYLARAEAVLAAVERTVDAANDGDHDIDLERNGSVLTLTFENGSKIIVNLQPPMKELWIAAKAGGFHYRFVDGEWRDTRTGTEFFSALTDYATQQAGLPITFRA</sequence>
<accession>A4JAS8</accession>
<reference key="1">
    <citation type="submission" date="2007-03" db="EMBL/GenBank/DDBJ databases">
        <title>Complete sequence of chromosome 1 of Burkholderia vietnamiensis G4.</title>
        <authorList>
            <consortium name="US DOE Joint Genome Institute"/>
            <person name="Copeland A."/>
            <person name="Lucas S."/>
            <person name="Lapidus A."/>
            <person name="Barry K."/>
            <person name="Detter J.C."/>
            <person name="Glavina del Rio T."/>
            <person name="Hammon N."/>
            <person name="Israni S."/>
            <person name="Dalin E."/>
            <person name="Tice H."/>
            <person name="Pitluck S."/>
            <person name="Chain P."/>
            <person name="Malfatti S."/>
            <person name="Shin M."/>
            <person name="Vergez L."/>
            <person name="Schmutz J."/>
            <person name="Larimer F."/>
            <person name="Land M."/>
            <person name="Hauser L."/>
            <person name="Kyrpides N."/>
            <person name="Tiedje J."/>
            <person name="Richardson P."/>
        </authorList>
    </citation>
    <scope>NUCLEOTIDE SEQUENCE [LARGE SCALE GENOMIC DNA]</scope>
    <source>
        <strain>G4 / LMG 22486</strain>
    </source>
</reference>
<comment type="function">
    <text evidence="1">Involved in iron-sulfur (Fe-S) cluster assembly. May act as a regulator of Fe-S biogenesis.</text>
</comment>
<comment type="similarity">
    <text evidence="1">Belongs to the frataxin family.</text>
</comment>
<organism>
    <name type="scientific">Burkholderia vietnamiensis (strain G4 / LMG 22486)</name>
    <name type="common">Burkholderia cepacia (strain R1808)</name>
    <dbReference type="NCBI Taxonomy" id="269482"/>
    <lineage>
        <taxon>Bacteria</taxon>
        <taxon>Pseudomonadati</taxon>
        <taxon>Pseudomonadota</taxon>
        <taxon>Betaproteobacteria</taxon>
        <taxon>Burkholderiales</taxon>
        <taxon>Burkholderiaceae</taxon>
        <taxon>Burkholderia</taxon>
        <taxon>Burkholderia cepacia complex</taxon>
    </lineage>
</organism>
<name>CYAY_BURVG</name>
<protein>
    <recommendedName>
        <fullName evidence="1">Iron-sulfur cluster assembly protein CyaY</fullName>
    </recommendedName>
</protein>